<keyword id="KW-0413">Isomerase</keyword>
<protein>
    <recommendedName>
        <fullName evidence="1">Ribose-5-phosphate isomerase A</fullName>
        <ecNumber evidence="1">5.3.1.6</ecNumber>
    </recommendedName>
    <alternativeName>
        <fullName evidence="1">Phosphoriboisomerase A</fullName>
        <shortName evidence="1">PRI</shortName>
    </alternativeName>
</protein>
<accession>B0B9W3</accession>
<dbReference type="EC" id="5.3.1.6" evidence="1"/>
<dbReference type="EMBL" id="AM884176">
    <property type="protein sequence ID" value="CAP03904.1"/>
    <property type="molecule type" value="Genomic_DNA"/>
</dbReference>
<dbReference type="RefSeq" id="WP_009871559.1">
    <property type="nucleotide sequence ID" value="NC_010287.1"/>
</dbReference>
<dbReference type="RefSeq" id="YP_001654541.1">
    <property type="nucleotide sequence ID" value="NC_010287.1"/>
</dbReference>
<dbReference type="SMR" id="B0B9W3"/>
<dbReference type="KEGG" id="ctb:CTL0465"/>
<dbReference type="PATRIC" id="fig|471472.4.peg.500"/>
<dbReference type="HOGENOM" id="CLU_056590_1_0_0"/>
<dbReference type="UniPathway" id="UPA00115">
    <property type="reaction ID" value="UER00412"/>
</dbReference>
<dbReference type="Proteomes" id="UP001154402">
    <property type="component" value="Chromosome"/>
</dbReference>
<dbReference type="GO" id="GO:0004751">
    <property type="term" value="F:ribose-5-phosphate isomerase activity"/>
    <property type="evidence" value="ECO:0007669"/>
    <property type="project" value="UniProtKB-UniRule"/>
</dbReference>
<dbReference type="GO" id="GO:0009052">
    <property type="term" value="P:pentose-phosphate shunt, non-oxidative branch"/>
    <property type="evidence" value="ECO:0007669"/>
    <property type="project" value="UniProtKB-UniRule"/>
</dbReference>
<dbReference type="CDD" id="cd01398">
    <property type="entry name" value="RPI_A"/>
    <property type="match status" value="1"/>
</dbReference>
<dbReference type="FunFam" id="3.40.50.1360:FF:000001">
    <property type="entry name" value="Ribose-5-phosphate isomerase A"/>
    <property type="match status" value="1"/>
</dbReference>
<dbReference type="Gene3D" id="3.30.70.260">
    <property type="match status" value="1"/>
</dbReference>
<dbReference type="Gene3D" id="3.40.50.1360">
    <property type="match status" value="1"/>
</dbReference>
<dbReference type="HAMAP" id="MF_00170">
    <property type="entry name" value="Rib_5P_isom_A"/>
    <property type="match status" value="1"/>
</dbReference>
<dbReference type="InterPro" id="IPR037171">
    <property type="entry name" value="NagB/RpiA_transferase-like"/>
</dbReference>
<dbReference type="InterPro" id="IPR050262">
    <property type="entry name" value="Ribose-5P_isomerase"/>
</dbReference>
<dbReference type="InterPro" id="IPR020672">
    <property type="entry name" value="Ribose5P_isomerase_typA_subgr"/>
</dbReference>
<dbReference type="InterPro" id="IPR004788">
    <property type="entry name" value="Ribose5P_isomerase_type_A"/>
</dbReference>
<dbReference type="NCBIfam" id="NF001924">
    <property type="entry name" value="PRK00702.1"/>
    <property type="match status" value="1"/>
</dbReference>
<dbReference type="NCBIfam" id="TIGR00021">
    <property type="entry name" value="rpiA"/>
    <property type="match status" value="1"/>
</dbReference>
<dbReference type="PANTHER" id="PTHR43748">
    <property type="entry name" value="RIBOSE-5-PHOSPHATE ISOMERASE 3, CHLOROPLASTIC-RELATED"/>
    <property type="match status" value="1"/>
</dbReference>
<dbReference type="PANTHER" id="PTHR43748:SF3">
    <property type="entry name" value="RIBOSE-5-PHOSPHATE ISOMERASE 3, CHLOROPLASTIC-RELATED"/>
    <property type="match status" value="1"/>
</dbReference>
<dbReference type="Pfam" id="PF06026">
    <property type="entry name" value="Rib_5-P_isom_A"/>
    <property type="match status" value="1"/>
</dbReference>
<dbReference type="SUPFAM" id="SSF75445">
    <property type="entry name" value="D-ribose-5-phosphate isomerase (RpiA), lid domain"/>
    <property type="match status" value="1"/>
</dbReference>
<dbReference type="SUPFAM" id="SSF100950">
    <property type="entry name" value="NagB/RpiA/CoA transferase-like"/>
    <property type="match status" value="1"/>
</dbReference>
<reference key="1">
    <citation type="journal article" date="2008" name="Genome Res.">
        <title>Chlamydia trachomatis: genome sequence analysis of lymphogranuloma venereum isolates.</title>
        <authorList>
            <person name="Thomson N.R."/>
            <person name="Holden M.T.G."/>
            <person name="Carder C."/>
            <person name="Lennard N."/>
            <person name="Lockey S.J."/>
            <person name="Marsh P."/>
            <person name="Skipp P."/>
            <person name="O'Connor C.D."/>
            <person name="Goodhead I."/>
            <person name="Norbertzcak H."/>
            <person name="Harris B."/>
            <person name="Ormond D."/>
            <person name="Rance R."/>
            <person name="Quail M.A."/>
            <person name="Parkhill J."/>
            <person name="Stephens R.S."/>
            <person name="Clarke I.N."/>
        </authorList>
    </citation>
    <scope>NUCLEOTIDE SEQUENCE [LARGE SCALE GENOMIC DNA]</scope>
    <source>
        <strain>ATCC VR-902B / DSM 19102 / 434/Bu</strain>
    </source>
</reference>
<name>RPIA_CHLT2</name>
<organism>
    <name type="scientific">Chlamydia trachomatis serovar L2 (strain ATCC VR-902B / DSM 19102 / 434/Bu)</name>
    <dbReference type="NCBI Taxonomy" id="471472"/>
    <lineage>
        <taxon>Bacteria</taxon>
        <taxon>Pseudomonadati</taxon>
        <taxon>Chlamydiota</taxon>
        <taxon>Chlamydiia</taxon>
        <taxon>Chlamydiales</taxon>
        <taxon>Chlamydiaceae</taxon>
        <taxon>Chlamydia/Chlamydophila group</taxon>
        <taxon>Chlamydia</taxon>
    </lineage>
</organism>
<sequence>MSKQPENSFSSDKFFPIKQKLALEAVALVEPGMCVGLGSGSTAREFILALGDRVRTERLVITAVASSRISQLLAEAVGIPLLDHSLLQDVDLVVDGADEVDPCLRMIKGGGGALFREKILLQSGKRNVILVDERKLVPTLGKFSLPIEIAPFGCSSVQRILNKQGYFGEWRETSAGERFITDNGNYIYDVRTPDSYANPEEDMIRLLQIRGIIDVGFVIAKAEVWVGYADGSIVRKKEHNEY</sequence>
<evidence type="ECO:0000255" key="1">
    <source>
        <dbReference type="HAMAP-Rule" id="MF_00170"/>
    </source>
</evidence>
<feature type="chain" id="PRO_1000097655" description="Ribose-5-phosphate isomerase A">
    <location>
        <begin position="1"/>
        <end position="242"/>
    </location>
</feature>
<feature type="active site" description="Proton acceptor" evidence="1">
    <location>
        <position position="117"/>
    </location>
</feature>
<feature type="binding site" evidence="1">
    <location>
        <begin position="39"/>
        <end position="42"/>
    </location>
    <ligand>
        <name>substrate</name>
    </ligand>
</feature>
<feature type="binding site" evidence="1">
    <location>
        <begin position="95"/>
        <end position="98"/>
    </location>
    <ligand>
        <name>substrate</name>
    </ligand>
</feature>
<feature type="binding site" evidence="1">
    <location>
        <begin position="108"/>
        <end position="111"/>
    </location>
    <ligand>
        <name>substrate</name>
    </ligand>
</feature>
<feature type="binding site" evidence="1">
    <location>
        <position position="135"/>
    </location>
    <ligand>
        <name>substrate</name>
    </ligand>
</feature>
<gene>
    <name evidence="1" type="primary">rpiA</name>
    <name type="ordered locus">CTL0465</name>
</gene>
<comment type="function">
    <text evidence="1">Catalyzes the reversible conversion of ribose-5-phosphate to ribulose 5-phosphate.</text>
</comment>
<comment type="catalytic activity">
    <reaction evidence="1">
        <text>aldehydo-D-ribose 5-phosphate = D-ribulose 5-phosphate</text>
        <dbReference type="Rhea" id="RHEA:14657"/>
        <dbReference type="ChEBI" id="CHEBI:58121"/>
        <dbReference type="ChEBI" id="CHEBI:58273"/>
        <dbReference type="EC" id="5.3.1.6"/>
    </reaction>
</comment>
<comment type="pathway">
    <text evidence="1">Carbohydrate degradation; pentose phosphate pathway; D-ribose 5-phosphate from D-ribulose 5-phosphate (non-oxidative stage): step 1/1.</text>
</comment>
<comment type="subunit">
    <text evidence="1">Homodimer.</text>
</comment>
<comment type="similarity">
    <text evidence="1">Belongs to the ribose 5-phosphate isomerase family.</text>
</comment>
<proteinExistence type="inferred from homology"/>